<protein>
    <recommendedName>
        <fullName>Uncharacterized protein X</fullName>
    </recommendedName>
</protein>
<organismHost>
    <name type="scientific">Homo sapiens</name>
    <name type="common">Human</name>
    <dbReference type="NCBI Taxonomy" id="9606"/>
</organismHost>
<organism>
    <name type="scientific">Human parvovirus B19 (strain HV)</name>
    <name type="common">HPV B19</name>
    <dbReference type="NCBI Taxonomy" id="648237"/>
    <lineage>
        <taxon>Viruses</taxon>
        <taxon>Monodnaviria</taxon>
        <taxon>Shotokuvirae</taxon>
        <taxon>Cossaviricota</taxon>
        <taxon>Quintoviricetes</taxon>
        <taxon>Piccovirales</taxon>
        <taxon>Parvoviridae</taxon>
        <taxon>Parvovirinae</taxon>
        <taxon>Erythroparvovirus</taxon>
        <taxon>Erythroparvovirus primate1</taxon>
    </lineage>
</organism>
<name>X_PAVHV</name>
<dbReference type="EMBL" id="AF162273">
    <property type="status" value="NOT_ANNOTATED_CDS"/>
    <property type="molecule type" value="Genomic_DNA"/>
</dbReference>
<dbReference type="SMR" id="P0DJZ1"/>
<dbReference type="Proteomes" id="UP000006624">
    <property type="component" value="Segment"/>
</dbReference>
<dbReference type="InterPro" id="IPR009629">
    <property type="entry name" value="Erythrovirus_X"/>
</dbReference>
<dbReference type="Pfam" id="PF06795">
    <property type="entry name" value="Erythrovirus_X"/>
    <property type="match status" value="1"/>
</dbReference>
<proteinExistence type="predicted"/>
<keyword id="KW-1185">Reference proteome</keyword>
<sequence>MDSYLTTPMPYHPVAVMQNLEEKMQYYLVKTYTSLGKLAYNYPVLTMLGLAMSYKLGPRKVLLTVLQGFMTLGIANWLSWE</sequence>
<feature type="chain" id="PRO_0000428718" description="Uncharacterized protein X">
    <location>
        <begin position="1"/>
        <end position="81"/>
    </location>
</feature>
<gene>
    <name type="primary">X</name>
</gene>
<accession>P0DJZ1</accession>
<reference key="1">
    <citation type="submission" date="1999-06" db="EMBL/GenBank/DDBJ databases">
        <title>B19 genome sequence and structure analysis.</title>
        <authorList>
            <person name="Gallinella G."/>
            <person name="Venturoli S."/>
        </authorList>
    </citation>
    <scope>NUCLEOTIDE SEQUENCE [GENOMIC DNA]</scope>
</reference>